<feature type="chain" id="PRO_0000344792" description="Malignant T-cell-amplified sequence 1-A">
    <location>
        <begin position="1"/>
        <end position="181"/>
    </location>
</feature>
<feature type="domain" description="PUA" evidence="2">
    <location>
        <begin position="92"/>
        <end position="171"/>
    </location>
</feature>
<organism>
    <name type="scientific">Xenopus laevis</name>
    <name type="common">African clawed frog</name>
    <dbReference type="NCBI Taxonomy" id="8355"/>
    <lineage>
        <taxon>Eukaryota</taxon>
        <taxon>Metazoa</taxon>
        <taxon>Chordata</taxon>
        <taxon>Craniata</taxon>
        <taxon>Vertebrata</taxon>
        <taxon>Euteleostomi</taxon>
        <taxon>Amphibia</taxon>
        <taxon>Batrachia</taxon>
        <taxon>Anura</taxon>
        <taxon>Pipoidea</taxon>
        <taxon>Pipidae</taxon>
        <taxon>Xenopodinae</taxon>
        <taxon>Xenopus</taxon>
        <taxon>Xenopus</taxon>
    </lineage>
</organism>
<accession>Q5PPY1</accession>
<protein>
    <recommendedName>
        <fullName>Malignant T-cell-amplified sequence 1-A</fullName>
        <shortName>MCT-1A</shortName>
    </recommendedName>
</protein>
<sequence>MFKKFDEKENVSNCIQLKTSVIKGIKNQLIDQFPGIEQWLNQIMPKKDPVKIVRCHEHIEILTVNGELLFFRQREGPFYPTLRLLHKYPFILPHQQVDKGAIKFVLSGANIMCPGLTSPGAKLYPAAADTVVAIMAEGKQHALCVGVMKMSADDIEKINKGIGIENIHYLNDGLWHMKTYK</sequence>
<evidence type="ECO:0000250" key="1"/>
<evidence type="ECO:0000255" key="2">
    <source>
        <dbReference type="PROSITE-ProRule" id="PRU00161"/>
    </source>
</evidence>
<evidence type="ECO:0000305" key="3"/>
<proteinExistence type="evidence at transcript level"/>
<dbReference type="EMBL" id="BC087444">
    <property type="protein sequence ID" value="AAH87444.1"/>
    <property type="molecule type" value="mRNA"/>
</dbReference>
<dbReference type="EMBL" id="BC106233">
    <property type="protein sequence ID" value="AAI06234.1"/>
    <property type="molecule type" value="mRNA"/>
</dbReference>
<dbReference type="SMR" id="Q5PPY1"/>
<dbReference type="BioGRID" id="106503">
    <property type="interactions" value="1"/>
</dbReference>
<dbReference type="IntAct" id="Q5PPY1">
    <property type="interactions" value="1"/>
</dbReference>
<dbReference type="DNASU" id="503679"/>
<dbReference type="GeneID" id="503679"/>
<dbReference type="KEGG" id="xla:503679"/>
<dbReference type="AGR" id="Xenbase:XB-GENE-998587"/>
<dbReference type="CTD" id="503679"/>
<dbReference type="Xenbase" id="XB-GENE-998587">
    <property type="gene designation" value="mcts1.S"/>
</dbReference>
<dbReference type="OMA" id="GVENIHY"/>
<dbReference type="OrthoDB" id="10249667at2759"/>
<dbReference type="Proteomes" id="UP000186698">
    <property type="component" value="Chromosome 8S"/>
</dbReference>
<dbReference type="Bgee" id="503679">
    <property type="expression patterns" value="Expressed in oocyte and 19 other cell types or tissues"/>
</dbReference>
<dbReference type="GO" id="GO:0005737">
    <property type="term" value="C:cytoplasm"/>
    <property type="evidence" value="ECO:0007669"/>
    <property type="project" value="UniProtKB-SubCell"/>
</dbReference>
<dbReference type="GO" id="GO:0003723">
    <property type="term" value="F:RNA binding"/>
    <property type="evidence" value="ECO:0007669"/>
    <property type="project" value="InterPro"/>
</dbReference>
<dbReference type="GO" id="GO:0001731">
    <property type="term" value="P:formation of translation preinitiation complex"/>
    <property type="evidence" value="ECO:0000318"/>
    <property type="project" value="GO_Central"/>
</dbReference>
<dbReference type="CDD" id="cd11609">
    <property type="entry name" value="MCT1_N"/>
    <property type="match status" value="1"/>
</dbReference>
<dbReference type="CDD" id="cd21155">
    <property type="entry name" value="PUA_MCTS-1-like"/>
    <property type="match status" value="1"/>
</dbReference>
<dbReference type="FunFam" id="3.10.400.20:FF:000001">
    <property type="entry name" value="Malignant T-cell-amplified sequence 1"/>
    <property type="match status" value="1"/>
</dbReference>
<dbReference type="Gene3D" id="3.10.400.20">
    <property type="match status" value="1"/>
</dbReference>
<dbReference type="InterPro" id="IPR016437">
    <property type="entry name" value="MCT-1/Tma20"/>
</dbReference>
<dbReference type="InterPro" id="IPR041366">
    <property type="entry name" value="Pre-PUA"/>
</dbReference>
<dbReference type="InterPro" id="IPR002478">
    <property type="entry name" value="PUA"/>
</dbReference>
<dbReference type="InterPro" id="IPR015947">
    <property type="entry name" value="PUA-like_sf"/>
</dbReference>
<dbReference type="InterPro" id="IPR004521">
    <property type="entry name" value="Uncharacterised_CHP00451"/>
</dbReference>
<dbReference type="NCBIfam" id="TIGR00451">
    <property type="entry name" value="unchar_dom_2"/>
    <property type="match status" value="1"/>
</dbReference>
<dbReference type="PANTHER" id="PTHR22798:SF0">
    <property type="entry name" value="MALIGNANT T-CELL-AMPLIFIED SEQUENCE 1"/>
    <property type="match status" value="1"/>
</dbReference>
<dbReference type="PANTHER" id="PTHR22798">
    <property type="entry name" value="MCT-1 PROTEIN"/>
    <property type="match status" value="1"/>
</dbReference>
<dbReference type="Pfam" id="PF17832">
    <property type="entry name" value="Pre-PUA"/>
    <property type="match status" value="1"/>
</dbReference>
<dbReference type="Pfam" id="PF01472">
    <property type="entry name" value="PUA"/>
    <property type="match status" value="1"/>
</dbReference>
<dbReference type="PIRSF" id="PIRSF005067">
    <property type="entry name" value="Tma_RNA-bind_prd"/>
    <property type="match status" value="1"/>
</dbReference>
<dbReference type="SMART" id="SM00359">
    <property type="entry name" value="PUA"/>
    <property type="match status" value="1"/>
</dbReference>
<dbReference type="SUPFAM" id="SSF88697">
    <property type="entry name" value="PUA domain-like"/>
    <property type="match status" value="1"/>
</dbReference>
<dbReference type="PROSITE" id="PS50890">
    <property type="entry name" value="PUA"/>
    <property type="match status" value="1"/>
</dbReference>
<keyword id="KW-0131">Cell cycle</keyword>
<keyword id="KW-0963">Cytoplasm</keyword>
<keyword id="KW-0341">Growth regulation</keyword>
<keyword id="KW-1185">Reference proteome</keyword>
<keyword id="KW-0804">Transcription</keyword>
<keyword id="KW-0805">Transcription regulation</keyword>
<comment type="function">
    <text evidence="1">Plays a role as translation enhancer and involved in cell cycle regulation.</text>
</comment>
<comment type="subcellular location">
    <subcellularLocation>
        <location evidence="1">Cytoplasm</location>
    </subcellularLocation>
</comment>
<comment type="domain">
    <text evidence="1">The PUA RNA-binding domain is critical for cap binding, but not sufficient for translation enhancer function.</text>
</comment>
<comment type="similarity">
    <text evidence="3">Belongs to the MCTS1 family.</text>
</comment>
<name>MCS1A_XENLA</name>
<gene>
    <name type="primary">mcts1-a</name>
</gene>
<reference key="1">
    <citation type="submission" date="2005-10" db="EMBL/GenBank/DDBJ databases">
        <authorList>
            <consortium name="NIH - Xenopus Gene Collection (XGC) project"/>
        </authorList>
    </citation>
    <scope>NUCLEOTIDE SEQUENCE [LARGE SCALE MRNA]</scope>
    <source>
        <tissue>Testis</tissue>
    </source>
</reference>